<protein>
    <recommendedName>
        <fullName>Integrin alpha ina-1</fullName>
    </recommendedName>
</protein>
<dbReference type="EMBL" id="Z19155">
    <property type="protein sequence ID" value="CAA79561.1"/>
    <property type="molecule type" value="Genomic_DNA"/>
</dbReference>
<dbReference type="PIR" id="S28277">
    <property type="entry name" value="S28277"/>
</dbReference>
<dbReference type="RefSeq" id="NP_499032.1">
    <property type="nucleotide sequence ID" value="NM_066631.8"/>
</dbReference>
<dbReference type="SMR" id="Q03600"/>
<dbReference type="BioGRID" id="41495">
    <property type="interactions" value="4"/>
</dbReference>
<dbReference type="FunCoup" id="Q03600">
    <property type="interactions" value="1186"/>
</dbReference>
<dbReference type="STRING" id="6239.F54G8.3.1"/>
<dbReference type="GlyCosmos" id="Q03600">
    <property type="glycosylation" value="7 sites, No reported glycans"/>
</dbReference>
<dbReference type="iPTMnet" id="Q03600"/>
<dbReference type="PaxDb" id="6239-F54G8.3"/>
<dbReference type="PeptideAtlas" id="Q03600"/>
<dbReference type="EnsemblMetazoa" id="F54G8.3.1">
    <property type="protein sequence ID" value="F54G8.3.1"/>
    <property type="gene ID" value="WBGene00002081"/>
</dbReference>
<dbReference type="GeneID" id="176296"/>
<dbReference type="KEGG" id="cel:CELE_F54G8.3"/>
<dbReference type="UCSC" id="F54G8.3">
    <property type="organism name" value="c. elegans"/>
</dbReference>
<dbReference type="AGR" id="WB:WBGene00002081"/>
<dbReference type="CTD" id="176296"/>
<dbReference type="WormBase" id="F54G8.3">
    <property type="protein sequence ID" value="CE00205"/>
    <property type="gene ID" value="WBGene00002081"/>
    <property type="gene designation" value="ina-1"/>
</dbReference>
<dbReference type="eggNOG" id="KOG3637">
    <property type="taxonomic scope" value="Eukaryota"/>
</dbReference>
<dbReference type="GeneTree" id="ENSGT00940000167229"/>
<dbReference type="HOGENOM" id="CLU_004111_1_0_1"/>
<dbReference type="InParanoid" id="Q03600"/>
<dbReference type="OMA" id="AKKQWIT"/>
<dbReference type="OrthoDB" id="5317514at2759"/>
<dbReference type="PhylomeDB" id="Q03600"/>
<dbReference type="Reactome" id="R-CEL-210991">
    <property type="pathway name" value="Basigin interactions"/>
</dbReference>
<dbReference type="Reactome" id="R-CEL-216083">
    <property type="pathway name" value="Integrin cell surface interactions"/>
</dbReference>
<dbReference type="Reactome" id="R-CEL-3000157">
    <property type="pathway name" value="Laminin interactions"/>
</dbReference>
<dbReference type="Reactome" id="R-CEL-3000170">
    <property type="pathway name" value="Syndecan interactions"/>
</dbReference>
<dbReference type="Reactome" id="R-CEL-3000178">
    <property type="pathway name" value="ECM proteoglycans"/>
</dbReference>
<dbReference type="Reactome" id="R-CEL-8874081">
    <property type="pathway name" value="MET activates PTK2 signaling"/>
</dbReference>
<dbReference type="PRO" id="PR:Q03600"/>
<dbReference type="Proteomes" id="UP000001940">
    <property type="component" value="Chromosome III"/>
</dbReference>
<dbReference type="Bgee" id="WBGene00002081">
    <property type="expression patterns" value="Expressed in pharyngeal muscle cell (C elegans) and 4 other cell types or tissues"/>
</dbReference>
<dbReference type="GO" id="GO:0042995">
    <property type="term" value="C:cell projection"/>
    <property type="evidence" value="ECO:0007669"/>
    <property type="project" value="UniProtKB-KW"/>
</dbReference>
<dbReference type="GO" id="GO:0009897">
    <property type="term" value="C:external side of plasma membrane"/>
    <property type="evidence" value="ECO:0000318"/>
    <property type="project" value="GO_Central"/>
</dbReference>
<dbReference type="GO" id="GO:0008305">
    <property type="term" value="C:integrin complex"/>
    <property type="evidence" value="ECO:0000353"/>
    <property type="project" value="WormBase"/>
</dbReference>
<dbReference type="GO" id="GO:0016020">
    <property type="term" value="C:membrane"/>
    <property type="evidence" value="ECO:0000314"/>
    <property type="project" value="WormBase"/>
</dbReference>
<dbReference type="GO" id="GO:0001891">
    <property type="term" value="C:phagocytic cup"/>
    <property type="evidence" value="ECO:0000314"/>
    <property type="project" value="WormBase"/>
</dbReference>
<dbReference type="GO" id="GO:0030670">
    <property type="term" value="C:phagocytic vesicle membrane"/>
    <property type="evidence" value="ECO:0007669"/>
    <property type="project" value="UniProtKB-SubCell"/>
</dbReference>
<dbReference type="GO" id="GO:0005886">
    <property type="term" value="C:plasma membrane"/>
    <property type="evidence" value="ECO:0000314"/>
    <property type="project" value="WormBase"/>
</dbReference>
<dbReference type="GO" id="GO:0005178">
    <property type="term" value="F:integrin binding"/>
    <property type="evidence" value="ECO:0000318"/>
    <property type="project" value="GO_Central"/>
</dbReference>
<dbReference type="GO" id="GO:0043236">
    <property type="term" value="F:laminin binding"/>
    <property type="evidence" value="ECO:0000250"/>
    <property type="project" value="WormBase"/>
</dbReference>
<dbReference type="GO" id="GO:0004888">
    <property type="term" value="F:transmembrane signaling receptor activity"/>
    <property type="evidence" value="ECO:0000314"/>
    <property type="project" value="WormBase"/>
</dbReference>
<dbReference type="GO" id="GO:0009887">
    <property type="term" value="P:animal organ morphogenesis"/>
    <property type="evidence" value="ECO:0000315"/>
    <property type="project" value="WormBase"/>
</dbReference>
<dbReference type="GO" id="GO:0007413">
    <property type="term" value="P:axonal fasciculation"/>
    <property type="evidence" value="ECO:0000315"/>
    <property type="project" value="WormBase"/>
</dbReference>
<dbReference type="GO" id="GO:0010171">
    <property type="term" value="P:body morphogenesis"/>
    <property type="evidence" value="ECO:0000315"/>
    <property type="project" value="WormBase"/>
</dbReference>
<dbReference type="GO" id="GO:0033627">
    <property type="term" value="P:cell adhesion mediated by integrin"/>
    <property type="evidence" value="ECO:0000318"/>
    <property type="project" value="GO_Central"/>
</dbReference>
<dbReference type="GO" id="GO:0098609">
    <property type="term" value="P:cell-cell adhesion"/>
    <property type="evidence" value="ECO:0000318"/>
    <property type="project" value="GO_Central"/>
</dbReference>
<dbReference type="GO" id="GO:0033631">
    <property type="term" value="P:cell-cell adhesion mediated by integrin"/>
    <property type="evidence" value="ECO:0000315"/>
    <property type="project" value="WormBase"/>
</dbReference>
<dbReference type="GO" id="GO:0007229">
    <property type="term" value="P:integrin-mediated signaling pathway"/>
    <property type="evidence" value="ECO:0000318"/>
    <property type="project" value="GO_Central"/>
</dbReference>
<dbReference type="GO" id="GO:0008078">
    <property type="term" value="P:mesodermal cell migration"/>
    <property type="evidence" value="ECO:0000315"/>
    <property type="project" value="WormBase"/>
</dbReference>
<dbReference type="GO" id="GO:0002119">
    <property type="term" value="P:nematode larval development"/>
    <property type="evidence" value="ECO:0000315"/>
    <property type="project" value="WormBase"/>
</dbReference>
<dbReference type="GO" id="GO:0045138">
    <property type="term" value="P:nematode male tail tip morphogenesis"/>
    <property type="evidence" value="ECO:0000315"/>
    <property type="project" value="WormBase"/>
</dbReference>
<dbReference type="GO" id="GO:0001764">
    <property type="term" value="P:neuron migration"/>
    <property type="evidence" value="ECO:0000315"/>
    <property type="project" value="WormBase"/>
</dbReference>
<dbReference type="GO" id="GO:1903356">
    <property type="term" value="P:positive regulation of distal tip cell migration"/>
    <property type="evidence" value="ECO:0000315"/>
    <property type="project" value="UniProtKB"/>
</dbReference>
<dbReference type="GO" id="GO:0032228">
    <property type="term" value="P:regulation of synaptic transmission, GABAergic"/>
    <property type="evidence" value="ECO:0000315"/>
    <property type="project" value="UniProtKB"/>
</dbReference>
<dbReference type="Gene3D" id="1.20.5.930">
    <property type="entry name" value="Bicelle-embedded integrin alpha(iib) transmembrane segment"/>
    <property type="match status" value="1"/>
</dbReference>
<dbReference type="Gene3D" id="2.130.10.130">
    <property type="entry name" value="Integrin alpha, N-terminal"/>
    <property type="match status" value="1"/>
</dbReference>
<dbReference type="Gene3D" id="2.60.40.1460">
    <property type="entry name" value="Integrin domains. Chain A, domain 2"/>
    <property type="match status" value="1"/>
</dbReference>
<dbReference type="Gene3D" id="2.60.40.1510">
    <property type="entry name" value="ntegrin, alpha v. Chain A, domain 3"/>
    <property type="match status" value="1"/>
</dbReference>
<dbReference type="Gene3D" id="2.60.40.1530">
    <property type="entry name" value="ntegrin, alpha v. Chain A, domain 4"/>
    <property type="match status" value="1"/>
</dbReference>
<dbReference type="InterPro" id="IPR013517">
    <property type="entry name" value="FG-GAP"/>
</dbReference>
<dbReference type="InterPro" id="IPR013519">
    <property type="entry name" value="Int_alpha_beta-p"/>
</dbReference>
<dbReference type="InterPro" id="IPR000413">
    <property type="entry name" value="Integrin_alpha"/>
</dbReference>
<dbReference type="InterPro" id="IPR018184">
    <property type="entry name" value="Integrin_alpha_C_CS"/>
</dbReference>
<dbReference type="InterPro" id="IPR013649">
    <property type="entry name" value="Integrin_alpha_Ig-like_1"/>
</dbReference>
<dbReference type="InterPro" id="IPR048285">
    <property type="entry name" value="Integrin_alpha_Ig-like_2"/>
</dbReference>
<dbReference type="InterPro" id="IPR048286">
    <property type="entry name" value="Integrin_alpha_Ig-like_3"/>
</dbReference>
<dbReference type="InterPro" id="IPR028994">
    <property type="entry name" value="Integrin_alpha_N"/>
</dbReference>
<dbReference type="InterPro" id="IPR032695">
    <property type="entry name" value="Integrin_dom_sf"/>
</dbReference>
<dbReference type="PANTHER" id="PTHR23220">
    <property type="entry name" value="INTEGRIN ALPHA"/>
    <property type="match status" value="1"/>
</dbReference>
<dbReference type="PANTHER" id="PTHR23220:SF122">
    <property type="entry name" value="INTEGRIN ALPHA-PS1"/>
    <property type="match status" value="1"/>
</dbReference>
<dbReference type="Pfam" id="PF01839">
    <property type="entry name" value="FG-GAP"/>
    <property type="match status" value="1"/>
</dbReference>
<dbReference type="Pfam" id="PF08441">
    <property type="entry name" value="Integrin_A_Ig_1"/>
    <property type="match status" value="1"/>
</dbReference>
<dbReference type="Pfam" id="PF20805">
    <property type="entry name" value="Integrin_A_Ig_2"/>
    <property type="match status" value="1"/>
</dbReference>
<dbReference type="Pfam" id="PF20806">
    <property type="entry name" value="Integrin_A_Ig_3"/>
    <property type="match status" value="1"/>
</dbReference>
<dbReference type="Pfam" id="PF00357">
    <property type="entry name" value="Integrin_alpha"/>
    <property type="match status" value="1"/>
</dbReference>
<dbReference type="PRINTS" id="PR01185">
    <property type="entry name" value="INTEGRINA"/>
</dbReference>
<dbReference type="SMART" id="SM00191">
    <property type="entry name" value="Int_alpha"/>
    <property type="match status" value="4"/>
</dbReference>
<dbReference type="SUPFAM" id="SSF69318">
    <property type="entry name" value="Integrin alpha N-terminal domain"/>
    <property type="match status" value="1"/>
</dbReference>
<dbReference type="SUPFAM" id="SSF69179">
    <property type="entry name" value="Integrin domains"/>
    <property type="match status" value="2"/>
</dbReference>
<dbReference type="PROSITE" id="PS51470">
    <property type="entry name" value="FG_GAP"/>
    <property type="match status" value="7"/>
</dbReference>
<dbReference type="PROSITE" id="PS00242">
    <property type="entry name" value="INTEGRIN_ALPHA"/>
    <property type="match status" value="1"/>
</dbReference>
<name>INA1_CAEEL</name>
<reference key="1">
    <citation type="journal article" date="1997" name="Neuron">
        <title>Neuronal migrations and axon fasciculation are disrupted in ina-1 integrin mutants.</title>
        <authorList>
            <person name="Baum P.D."/>
            <person name="Garriga G."/>
        </authorList>
    </citation>
    <scope>NUCLEOTIDE SEQUENCE [GENOMIC DNA]</scope>
    <scope>FUNCTION</scope>
    <scope>INTERACTION WITH PAT-3</scope>
</reference>
<reference key="2">
    <citation type="journal article" date="1994" name="Nature">
        <title>2.2 Mb of contiguous nucleotide sequence from chromosome III of C. elegans.</title>
        <authorList>
            <person name="Wilson R."/>
            <person name="Ainscough R."/>
            <person name="Anderson K."/>
            <person name="Baynes C."/>
            <person name="Berks M."/>
            <person name="Bonfield J."/>
            <person name="Burton J."/>
            <person name="Connell M."/>
            <person name="Copsey T."/>
            <person name="Cooper J."/>
            <person name="Coulson A."/>
            <person name="Craxton M."/>
            <person name="Dear S."/>
            <person name="Du Z."/>
            <person name="Durbin R."/>
            <person name="Favello A."/>
            <person name="Fraser A."/>
            <person name="Fulton L."/>
            <person name="Gardner A."/>
            <person name="Green P."/>
            <person name="Hawkins T."/>
            <person name="Hillier L."/>
            <person name="Jier M."/>
            <person name="Johnston L."/>
            <person name="Jones M."/>
            <person name="Kershaw J."/>
            <person name="Kirsten J."/>
            <person name="Laisster N."/>
            <person name="Latreille P."/>
            <person name="Lightning J."/>
            <person name="Lloyd C."/>
            <person name="Mortimore B."/>
            <person name="O'Callaghan M."/>
            <person name="Parsons J."/>
            <person name="Percy C."/>
            <person name="Rifken L."/>
            <person name="Roopra A."/>
            <person name="Saunders D."/>
            <person name="Shownkeen R."/>
            <person name="Sims M."/>
            <person name="Smaldon N."/>
            <person name="Smith A."/>
            <person name="Smith M."/>
            <person name="Sonnhammer E."/>
            <person name="Staden R."/>
            <person name="Sulston J."/>
            <person name="Thierry-Mieg J."/>
            <person name="Thomas K."/>
            <person name="Vaudin M."/>
            <person name="Vaughan K."/>
            <person name="Waterston R."/>
            <person name="Watson A."/>
            <person name="Weinstock L."/>
            <person name="Wilkinson-Sproat J."/>
            <person name="Wohldman P."/>
        </authorList>
    </citation>
    <scope>NUCLEOTIDE SEQUENCE [LARGE SCALE GENOMIC DNA]</scope>
    <source>
        <strain>Bristol N2</strain>
    </source>
</reference>
<reference key="3">
    <citation type="journal article" date="1998" name="Science">
        <title>Genome sequence of the nematode C. elegans: a platform for investigating biology.</title>
        <authorList>
            <consortium name="The C. elegans sequencing consortium"/>
        </authorList>
    </citation>
    <scope>NUCLEOTIDE SEQUENCE [LARGE SCALE GENOMIC DNA]</scope>
    <source>
        <strain>Bristol N2</strain>
    </source>
</reference>
<reference key="4">
    <citation type="journal article" date="2005" name="Glycobiology">
        <title>Identification of the hydrophobic glycoproteins of Caenorhabditis elegans.</title>
        <authorList>
            <person name="Fan X."/>
            <person name="She Y.-M."/>
            <person name="Bagshaw R.D."/>
            <person name="Callahan J.W."/>
            <person name="Schachter H."/>
            <person name="Mahuran D.J."/>
        </authorList>
    </citation>
    <scope>GLYCOSYLATION [LARGE SCALE ANALYSIS] AT ASN-788</scope>
    <scope>IDENTIFICATION BY MASS SPECTROMETRY</scope>
</reference>
<reference key="5">
    <citation type="journal article" date="2007" name="Mol. Cell. Proteomics">
        <title>Proteomics reveals N-linked glycoprotein diversity in Caenorhabditis elegans and suggests an atypical translocation mechanism for integral membrane proteins.</title>
        <authorList>
            <person name="Kaji H."/>
            <person name="Kamiie J."/>
            <person name="Kawakami H."/>
            <person name="Kido K."/>
            <person name="Yamauchi Y."/>
            <person name="Shinkawa T."/>
            <person name="Taoka M."/>
            <person name="Takahashi N."/>
            <person name="Isobe T."/>
        </authorList>
    </citation>
    <scope>GLYCOSYLATION [LARGE SCALE ANALYSIS] AT ASN-108; ASN-580; ASN-788; ASN-851 AND ASN-1026</scope>
    <scope>IDENTIFICATION BY MASS SPECTROMETRY</scope>
    <source>
        <strain>Bristol N2</strain>
    </source>
</reference>
<reference key="6">
    <citation type="journal article" date="2008" name="PLoS Genet.">
        <title>A RAC/CDC-42-independent GIT/PIX/PAK signaling pathway mediates cell migration in C. elegans.</title>
        <authorList>
            <person name="Lucanic M."/>
            <person name="Cheng H.J."/>
        </authorList>
    </citation>
    <scope>FUNCTION</scope>
    <scope>DISRUPTION PHENOTYPE</scope>
</reference>
<reference key="7">
    <citation type="journal article" date="2010" name="Curr. Biol.">
        <title>Engulfment of apoptotic cells in C. elegans is mediated by integrin alpha/SRC signaling.</title>
        <authorList>
            <person name="Hsu T.Y."/>
            <person name="Wu Y.C."/>
        </authorList>
    </citation>
    <scope>FUNCTION</scope>
    <scope>INTERACTION WITH SRC-1</scope>
    <scope>SUBCELLULAR LOCATION</scope>
    <scope>DISRUPTION PHENOTYPE</scope>
</reference>
<reference key="8">
    <citation type="journal article" date="2012" name="Dev. Biol.">
        <title>mig-38, a novel gene that regulates distal tip cell turning during gonadogenesis in C. elegans hermaphrodites.</title>
        <authorList>
            <person name="Martynovsky M."/>
            <person name="Wong M.C."/>
            <person name="Byrd D.T."/>
            <person name="Kimble J."/>
            <person name="Schwarzbauer J.E."/>
        </authorList>
    </citation>
    <scope>FUNCTION</scope>
    <scope>DISRUPTION PHENOTYPE</scope>
</reference>
<reference key="9">
    <citation type="journal article" date="2014" name="Dev. Cell">
        <title>Cell intrinsic modulation of Wnt signaling controls neuroblast migration in C. elegans.</title>
        <authorList>
            <person name="Mentink R.A."/>
            <person name="Middelkoop T.C."/>
            <person name="Rella L."/>
            <person name="Ji N."/>
            <person name="Tang C.Y."/>
            <person name="Betist M.C."/>
            <person name="van Oudenaarden A."/>
            <person name="Korswagen H.C."/>
        </authorList>
    </citation>
    <scope>FUNCTION</scope>
</reference>
<reference key="10">
    <citation type="journal article" date="2015" name="Gene">
        <title>Transcription factor hlh-2/E/Daughterless drives expression of alpha integrin ina-1 during DTC migration in C. elegans.</title>
        <authorList>
            <person name="Meighan C.M."/>
            <person name="Kann A.P."/>
            <person name="Egress E.R."/>
        </authorList>
    </citation>
    <scope>FUNCTION</scope>
</reference>
<comment type="function">
    <text evidence="6 7 8 9 10">Plays a role in cell migration, axon fasciculation, and morphogenesis (PubMed:9247263). During gonad morphogenesis, involved in distal tip cell (DTC)-mediated guidance of gonad elongation, in maintaining their sharp tapering morphology and in their migration (PubMed:19023419, PubMed:22732572, PubMed:25982859). Involved in the anterior-posterior positioning of QR neuroblast descendants by regulating the migratory speed of QR.p (PubMed:25373777). Probably by acting as a receptor for apoptotic cells, plays a role in the clearance of apoptotic cells during mid-embryogenesis (PubMed:20226672).</text>
</comment>
<comment type="subunit">
    <text evidence="7 10">Heterodimer of an alpha and a beta subunit. Alpha ina-1 associates with beta pat-3 (PubMed:9247263). Interacts (via cytoplasmic domain) with src-1 (when phosphorylated at 'Tyr-416') (PubMed:20226672).</text>
</comment>
<comment type="subcellular location">
    <subcellularLocation>
        <location evidence="7">Membrane</location>
        <topology evidence="1">Single-pass type I membrane protein</topology>
    </subcellularLocation>
    <subcellularLocation>
        <location evidence="7">Cell projection</location>
        <location evidence="7">Phagocytic cup</location>
    </subcellularLocation>
    <subcellularLocation>
        <location evidence="7">Cytoplasmic vesicle</location>
        <location evidence="7">Phagosome membrane</location>
    </subcellularLocation>
    <text evidence="7">Enriched at the cell contact with apoptotic cells and in phagocytic pseudopods during apoptotic cell engulfment. Co-localizes with src-1 during phagosome cup formation.</text>
</comment>
<comment type="disruption phenotype">
    <text evidence="6 7 8">RNAi-mediated knockdown in distal tip cell (DTC) causes DTC morphological and guidance defects such as precocious dorsal turns, a failure to reach the vulva and a bloated distal gonad (PubMed:19023419). Embryos at the comma, 1.5-fold and 2-fold stages have increased number of cell corpses due to a defect in cell engulfment (PubMed:20226672). RNAi-mediated knockdown with mig-38 results in enhanced gonad DTC migration (PubMed:22732572).</text>
</comment>
<comment type="similarity">
    <text evidence="11">Belongs to the integrin alpha chain family.</text>
</comment>
<proteinExistence type="evidence at protein level"/>
<evidence type="ECO:0000250" key="1"/>
<evidence type="ECO:0000255" key="2"/>
<evidence type="ECO:0000255" key="3">
    <source>
        <dbReference type="PROSITE-ProRule" id="PRU00803"/>
    </source>
</evidence>
<evidence type="ECO:0000269" key="4">
    <source>
    </source>
</evidence>
<evidence type="ECO:0000269" key="5">
    <source>
    </source>
</evidence>
<evidence type="ECO:0000269" key="6">
    <source>
    </source>
</evidence>
<evidence type="ECO:0000269" key="7">
    <source>
    </source>
</evidence>
<evidence type="ECO:0000269" key="8">
    <source>
    </source>
</evidence>
<evidence type="ECO:0000269" key="9">
    <source>
    </source>
</evidence>
<evidence type="ECO:0000269" key="10">
    <source>
    </source>
</evidence>
<evidence type="ECO:0000305" key="11"/>
<feature type="signal peptide" evidence="2">
    <location>
        <begin position="1"/>
        <end position="19"/>
    </location>
</feature>
<feature type="chain" id="PRO_0000016331" description="Integrin alpha ina-1">
    <location>
        <begin position="20"/>
        <end position="1139"/>
    </location>
</feature>
<feature type="topological domain" description="Extracellular" evidence="2">
    <location>
        <begin position="20"/>
        <end position="1084"/>
    </location>
</feature>
<feature type="transmembrane region" description="Helical" evidence="2">
    <location>
        <begin position="1085"/>
        <end position="1106"/>
    </location>
</feature>
<feature type="topological domain" description="Cytoplasmic" evidence="2">
    <location>
        <begin position="1107"/>
        <end position="1139"/>
    </location>
</feature>
<feature type="repeat" description="FG-GAP 1" evidence="3">
    <location>
        <begin position="21"/>
        <end position="85"/>
    </location>
</feature>
<feature type="repeat" description="FG-GAP 2" evidence="3">
    <location>
        <begin position="111"/>
        <end position="171"/>
    </location>
</feature>
<feature type="repeat" description="FG-GAP 3" evidence="3">
    <location>
        <begin position="180"/>
        <end position="231"/>
    </location>
</feature>
<feature type="repeat" description="FG-GAP 4" evidence="3">
    <location>
        <begin position="242"/>
        <end position="302"/>
    </location>
</feature>
<feature type="repeat" description="FG-GAP 5" evidence="3">
    <location>
        <begin position="307"/>
        <end position="370"/>
    </location>
</feature>
<feature type="repeat" description="FG-GAP 6" evidence="3">
    <location>
        <begin position="378"/>
        <end position="438"/>
    </location>
</feature>
<feature type="repeat" description="FG-GAP 7" evidence="3">
    <location>
        <begin position="448"/>
        <end position="510"/>
    </location>
</feature>
<feature type="glycosylation site" description="N-linked (GlcNAc...) asparagine" evidence="5">
    <location>
        <position position="108"/>
    </location>
</feature>
<feature type="glycosylation site" description="N-linked (GlcNAc...) asparagine" evidence="2">
    <location>
        <position position="136"/>
    </location>
</feature>
<feature type="glycosylation site" description="N-linked (GlcNAc...) asparagine" evidence="2">
    <location>
        <position position="313"/>
    </location>
</feature>
<feature type="glycosylation site" description="N-linked (GlcNAc...) asparagine" evidence="5">
    <location>
        <position position="580"/>
    </location>
</feature>
<feature type="glycosylation site" description="N-linked (GlcNAc...) asparagine" evidence="4 5">
    <location>
        <position position="788"/>
    </location>
</feature>
<feature type="glycosylation site" description="N-linked (GlcNAc...) asparagine" evidence="5">
    <location>
        <position position="851"/>
    </location>
</feature>
<feature type="glycosylation site" description="N-linked (GlcNAc...) asparagine" evidence="5">
    <location>
        <position position="1026"/>
    </location>
</feature>
<accession>Q03600</accession>
<sequence>MRECIISWTLLLCLSCVKSFNLDVNAPIYRYGPSGTNFGYSVAEHFKGDKPVMLIGAPRGESGQTGTERAGAMYACDINTFYNGGSNHWCEQVRFEYENVEDYAKRPNETRGRTVHPLGKNDQLLASTIVSKGTKNGSALVCAPLIRYHQTAAYPQGACYELESNLRLQSTYATCAQKNLPTTDRHNEYGGCMEGFSAAITQDTIVTGLIGAVKWTGGVFAKKSSANIFDSVVEKYTMNQPNGDMIRTRLVAHDYLGYSVDIGRFGFWYEDGKPITVVSGATRYGEHGAVIFLPFIQDSSSKLTLNEDKFIINGTAMGSAFGYSIEVVDLNGDGFDDLIVGAPFEHRSGIDGNFGGIVYVYFSQGVQRKQHESHLVFHPPKILKNPDFYSQFGLSITKLGNVDGDKSKLNDFAVGAPFAFDGAGAVYIYLGTKNIEKFRKKPAQVIKGNDLPNLPPGGMRSFGFSLSGGSDMDENGYPDLLIGSPSKNFVALLRSRPVISIETKHKMEKRMVDIDKGVNCPRGAKTCFPLDMVIYVDEETKRGAELVDFSSDVFMCNLEAIPFRADTTARGFIEGSHSHNYSWPCGSNSHVQKRTYRQLIYLPVQESKDWITPLKFRFTVSIRNEKKPVQPPQGSQLVDLKHYPVLNKYGASYEFDVPFNTLCGEDHTCQTDLSLKAAFKDIPLTSNGYVSNVGEKDYLDLTFTVENKKEKAYQANFYLEYNEEELELPQVQGSKRMIAETIGKNIVHLPLGNPMNGASKHQFTIQFKLTRGRTEGIGKALKFMAHVNSTSQETEEELKDNKWEAEVQIIKKAELEIYGISDPDRVFFGGKARAESELELEEDIGTMVRHNYTIINHGPWTVRNVEAHISWPYQLRSRFGRGKNALYLLDVPTITTEFTDGTSEVRKCFIKQQYEYVNPAEIKLNTKYSTQETAPHRVEHRMKREIDEDEEEQSDDLGAVEENIPWFSTANFWNLFAIKGGDGRPREVKHLSCQDNTANCFTVICHFDFIDANSAVVIDLRARLWNATFIEDYSDVESVKIRSFGKLQLDESQGIDDDPNNNAAFVETSADPDRPTIGDSRPIPWWIYVIAAVIGVLILSLIIICLSKCGFFKRNRLDQPSLYTAQLKHEREEWADTGL</sequence>
<gene>
    <name type="primary">ina-1</name>
    <name type="ORF">F54G8.3</name>
</gene>
<organism>
    <name type="scientific">Caenorhabditis elegans</name>
    <dbReference type="NCBI Taxonomy" id="6239"/>
    <lineage>
        <taxon>Eukaryota</taxon>
        <taxon>Metazoa</taxon>
        <taxon>Ecdysozoa</taxon>
        <taxon>Nematoda</taxon>
        <taxon>Chromadorea</taxon>
        <taxon>Rhabditida</taxon>
        <taxon>Rhabditina</taxon>
        <taxon>Rhabditomorpha</taxon>
        <taxon>Rhabditoidea</taxon>
        <taxon>Rhabditidae</taxon>
        <taxon>Peloderinae</taxon>
        <taxon>Caenorhabditis</taxon>
    </lineage>
</organism>
<keyword id="KW-0130">Cell adhesion</keyword>
<keyword id="KW-0966">Cell projection</keyword>
<keyword id="KW-0968">Cytoplasmic vesicle</keyword>
<keyword id="KW-0325">Glycoprotein</keyword>
<keyword id="KW-0401">Integrin</keyword>
<keyword id="KW-0472">Membrane</keyword>
<keyword id="KW-0524">Neurogenesis</keyword>
<keyword id="KW-0675">Receptor</keyword>
<keyword id="KW-1185">Reference proteome</keyword>
<keyword id="KW-0677">Repeat</keyword>
<keyword id="KW-0732">Signal</keyword>
<keyword id="KW-0812">Transmembrane</keyword>
<keyword id="KW-1133">Transmembrane helix</keyword>